<reference key="1">
    <citation type="journal article" date="2000" name="Nature">
        <title>Sequence and analysis of chromosome 3 of the plant Arabidopsis thaliana.</title>
        <authorList>
            <person name="Salanoubat M."/>
            <person name="Lemcke K."/>
            <person name="Rieger M."/>
            <person name="Ansorge W."/>
            <person name="Unseld M."/>
            <person name="Fartmann B."/>
            <person name="Valle G."/>
            <person name="Bloecker H."/>
            <person name="Perez-Alonso M."/>
            <person name="Obermaier B."/>
            <person name="Delseny M."/>
            <person name="Boutry M."/>
            <person name="Grivell L.A."/>
            <person name="Mache R."/>
            <person name="Puigdomenech P."/>
            <person name="De Simone V."/>
            <person name="Choisne N."/>
            <person name="Artiguenave F."/>
            <person name="Robert C."/>
            <person name="Brottier P."/>
            <person name="Wincker P."/>
            <person name="Cattolico L."/>
            <person name="Weissenbach J."/>
            <person name="Saurin W."/>
            <person name="Quetier F."/>
            <person name="Schaefer M."/>
            <person name="Mueller-Auer S."/>
            <person name="Gabel C."/>
            <person name="Fuchs M."/>
            <person name="Benes V."/>
            <person name="Wurmbach E."/>
            <person name="Drzonek H."/>
            <person name="Erfle H."/>
            <person name="Jordan N."/>
            <person name="Bangert S."/>
            <person name="Wiedelmann R."/>
            <person name="Kranz H."/>
            <person name="Voss H."/>
            <person name="Holland R."/>
            <person name="Brandt P."/>
            <person name="Nyakatura G."/>
            <person name="Vezzi A."/>
            <person name="D'Angelo M."/>
            <person name="Pallavicini A."/>
            <person name="Toppo S."/>
            <person name="Simionati B."/>
            <person name="Conrad A."/>
            <person name="Hornischer K."/>
            <person name="Kauer G."/>
            <person name="Loehnert T.-H."/>
            <person name="Nordsiek G."/>
            <person name="Reichelt J."/>
            <person name="Scharfe M."/>
            <person name="Schoen O."/>
            <person name="Bargues M."/>
            <person name="Terol J."/>
            <person name="Climent J."/>
            <person name="Navarro P."/>
            <person name="Collado C."/>
            <person name="Perez-Perez A."/>
            <person name="Ottenwaelder B."/>
            <person name="Duchemin D."/>
            <person name="Cooke R."/>
            <person name="Laudie M."/>
            <person name="Berger-Llauro C."/>
            <person name="Purnelle B."/>
            <person name="Masuy D."/>
            <person name="de Haan M."/>
            <person name="Maarse A.C."/>
            <person name="Alcaraz J.-P."/>
            <person name="Cottet A."/>
            <person name="Casacuberta E."/>
            <person name="Monfort A."/>
            <person name="Argiriou A."/>
            <person name="Flores M."/>
            <person name="Liguori R."/>
            <person name="Vitale D."/>
            <person name="Mannhaupt G."/>
            <person name="Haase D."/>
            <person name="Schoof H."/>
            <person name="Rudd S."/>
            <person name="Zaccaria P."/>
            <person name="Mewes H.-W."/>
            <person name="Mayer K.F.X."/>
            <person name="Kaul S."/>
            <person name="Town C.D."/>
            <person name="Koo H.L."/>
            <person name="Tallon L.J."/>
            <person name="Jenkins J."/>
            <person name="Rooney T."/>
            <person name="Rizzo M."/>
            <person name="Walts A."/>
            <person name="Utterback T."/>
            <person name="Fujii C.Y."/>
            <person name="Shea T.P."/>
            <person name="Creasy T.H."/>
            <person name="Haas B."/>
            <person name="Maiti R."/>
            <person name="Wu D."/>
            <person name="Peterson J."/>
            <person name="Van Aken S."/>
            <person name="Pai G."/>
            <person name="Militscher J."/>
            <person name="Sellers P."/>
            <person name="Gill J.E."/>
            <person name="Feldblyum T.V."/>
            <person name="Preuss D."/>
            <person name="Lin X."/>
            <person name="Nierman W.C."/>
            <person name="Salzberg S.L."/>
            <person name="White O."/>
            <person name="Venter J.C."/>
            <person name="Fraser C.M."/>
            <person name="Kaneko T."/>
            <person name="Nakamura Y."/>
            <person name="Sato S."/>
            <person name="Kato T."/>
            <person name="Asamizu E."/>
            <person name="Sasamoto S."/>
            <person name="Kimura T."/>
            <person name="Idesawa K."/>
            <person name="Kawashima K."/>
            <person name="Kishida Y."/>
            <person name="Kiyokawa C."/>
            <person name="Kohara M."/>
            <person name="Matsumoto M."/>
            <person name="Matsuno A."/>
            <person name="Muraki A."/>
            <person name="Nakayama S."/>
            <person name="Nakazaki N."/>
            <person name="Shinpo S."/>
            <person name="Takeuchi C."/>
            <person name="Wada T."/>
            <person name="Watanabe A."/>
            <person name="Yamada M."/>
            <person name="Yasuda M."/>
            <person name="Tabata S."/>
        </authorList>
    </citation>
    <scope>NUCLEOTIDE SEQUENCE [LARGE SCALE GENOMIC DNA]</scope>
    <source>
        <strain>cv. Columbia</strain>
    </source>
</reference>
<reference key="2">
    <citation type="journal article" date="2017" name="Plant J.">
        <title>Araport11: a complete reannotation of the Arabidopsis thaliana reference genome.</title>
        <authorList>
            <person name="Cheng C.Y."/>
            <person name="Krishnakumar V."/>
            <person name="Chan A.P."/>
            <person name="Thibaud-Nissen F."/>
            <person name="Schobel S."/>
            <person name="Town C.D."/>
        </authorList>
    </citation>
    <scope>GENOME REANNOTATION</scope>
    <source>
        <strain>cv. Columbia</strain>
    </source>
</reference>
<reference key="3">
    <citation type="journal article" date="2003" name="Science">
        <title>Empirical analysis of transcriptional activity in the Arabidopsis genome.</title>
        <authorList>
            <person name="Yamada K."/>
            <person name="Lim J."/>
            <person name="Dale J.M."/>
            <person name="Chen H."/>
            <person name="Shinn P."/>
            <person name="Palm C.J."/>
            <person name="Southwick A.M."/>
            <person name="Wu H.C."/>
            <person name="Kim C.J."/>
            <person name="Nguyen M."/>
            <person name="Pham P.K."/>
            <person name="Cheuk R.F."/>
            <person name="Karlin-Newmann G."/>
            <person name="Liu S.X."/>
            <person name="Lam B."/>
            <person name="Sakano H."/>
            <person name="Wu T."/>
            <person name="Yu G."/>
            <person name="Miranda M."/>
            <person name="Quach H.L."/>
            <person name="Tripp M."/>
            <person name="Chang C.H."/>
            <person name="Lee J.M."/>
            <person name="Toriumi M.J."/>
            <person name="Chan M.M."/>
            <person name="Tang C.C."/>
            <person name="Onodera C.S."/>
            <person name="Deng J.M."/>
            <person name="Akiyama K."/>
            <person name="Ansari Y."/>
            <person name="Arakawa T."/>
            <person name="Banh J."/>
            <person name="Banno F."/>
            <person name="Bowser L."/>
            <person name="Brooks S.Y."/>
            <person name="Carninci P."/>
            <person name="Chao Q."/>
            <person name="Choy N."/>
            <person name="Enju A."/>
            <person name="Goldsmith A.D."/>
            <person name="Gurjal M."/>
            <person name="Hansen N.F."/>
            <person name="Hayashizaki Y."/>
            <person name="Johnson-Hopson C."/>
            <person name="Hsuan V.W."/>
            <person name="Iida K."/>
            <person name="Karnes M."/>
            <person name="Khan S."/>
            <person name="Koesema E."/>
            <person name="Ishida J."/>
            <person name="Jiang P.X."/>
            <person name="Jones T."/>
            <person name="Kawai J."/>
            <person name="Kamiya A."/>
            <person name="Meyers C."/>
            <person name="Nakajima M."/>
            <person name="Narusaka M."/>
            <person name="Seki M."/>
            <person name="Sakurai T."/>
            <person name="Satou M."/>
            <person name="Tamse R."/>
            <person name="Vaysberg M."/>
            <person name="Wallender E.K."/>
            <person name="Wong C."/>
            <person name="Yamamura Y."/>
            <person name="Yuan S."/>
            <person name="Shinozaki K."/>
            <person name="Davis R.W."/>
            <person name="Theologis A."/>
            <person name="Ecker J.R."/>
        </authorList>
    </citation>
    <scope>NUCLEOTIDE SEQUENCE [LARGE SCALE MRNA]</scope>
    <source>
        <strain>cv. Columbia</strain>
    </source>
</reference>
<reference key="4">
    <citation type="submission" date="2002-03" db="EMBL/GenBank/DDBJ databases">
        <title>Full-length cDNA from Arabidopsis thaliana.</title>
        <authorList>
            <person name="Brover V.V."/>
            <person name="Troukhan M.E."/>
            <person name="Alexandrov N.A."/>
            <person name="Lu Y.-P."/>
            <person name="Flavell R.B."/>
            <person name="Feldmann K.A."/>
        </authorList>
    </citation>
    <scope>NUCLEOTIDE SEQUENCE [LARGE SCALE MRNA]</scope>
</reference>
<reference key="5">
    <citation type="book" date="2007" name="Proceedings of the 18th international conference on Arabidopsis research">
        <title>S-acylation: dynamic control of plant development and sigalling by lipid modification of proteins.</title>
        <authorList>
            <person name="Hemsley P.A."/>
            <person name="Taylor L."/>
            <person name="Grierson C.S."/>
        </authorList>
    </citation>
    <scope>GENE FAMILY</scope>
    <scope>FUNCTION</scope>
</reference>
<reference key="6">
    <citation type="journal article" date="2012" name="Plant Physiol.">
        <title>Genomics and localization of the Arabidopsis DHHC-cysteine-rich domain S-acyltransferase protein family.</title>
        <authorList>
            <person name="Batistic O."/>
        </authorList>
    </citation>
    <scope>FUNCTION</scope>
    <scope>SUBCELLULAR LOCATION</scope>
    <scope>GENE FAMILY</scope>
    <scope>NOMENCLATURE</scope>
</reference>
<reference key="7">
    <citation type="journal article" date="2013" name="Plant Cell">
        <title>Protein S-acyl transferase10 is critical for development and salt tolerance in Arabidopsis.</title>
        <authorList>
            <person name="Zhou L.Z."/>
            <person name="Li S."/>
            <person name="Feng Q.N."/>
            <person name="Zhang Y.L."/>
            <person name="Zhao X."/>
            <person name="Zeng Y.L."/>
            <person name="Wang H."/>
            <person name="Jiang L."/>
            <person name="Zhang Y."/>
        </authorList>
    </citation>
    <scope>FUNCTION</scope>
    <scope>MUTAGENESIS OF CYS-192</scope>
    <scope>DISRUPTION PHENOTYPE</scope>
    <scope>SUBCELLULAR LOCATION</scope>
    <scope>TISSUE SPECIFICITY</scope>
    <scope>DEVELOPMENTAL STAGE</scope>
    <scope>INDUCTION BY SALT</scope>
</reference>
<comment type="function">
    <text evidence="4 5 6">S-acyltransferase involved in protein lipid modification. Catalyzes the palmitoylation of proteins peripheral or integral to the tonoplast. Required for the tonoplast localization of CBL2, CBL3 and CBL6, but not for the plasma membrane localization of CBL9, for the endosome localization of RABF1 or for the endomembrane localization of RABF2B.</text>
</comment>
<comment type="catalytic activity">
    <reaction>
        <text>L-cysteinyl-[protein] + hexadecanoyl-CoA = S-hexadecanoyl-L-cysteinyl-[protein] + CoA</text>
        <dbReference type="Rhea" id="RHEA:36683"/>
        <dbReference type="Rhea" id="RHEA-COMP:10131"/>
        <dbReference type="Rhea" id="RHEA-COMP:11032"/>
        <dbReference type="ChEBI" id="CHEBI:29950"/>
        <dbReference type="ChEBI" id="CHEBI:57287"/>
        <dbReference type="ChEBI" id="CHEBI:57379"/>
        <dbReference type="ChEBI" id="CHEBI:74151"/>
        <dbReference type="EC" id="2.3.1.225"/>
    </reaction>
</comment>
<comment type="subcellular location">
    <subcellularLocation>
        <location evidence="7">Vacuole membrane</location>
        <topology evidence="7">Multi-pass membrane protein</topology>
    </subcellularLocation>
    <text evidence="4 5">Transient expression results in mistargeting of PAT10 to the Golgi apparatus, while the non-functional mutant is also localized in Golgi apparatus membranes.</text>
</comment>
<comment type="tissue specificity">
    <text evidence="5">Expressed in mature embryos, embryo sacs, cotyledons, whole seedlings, hydathodes, guard cells, sites of lateral root initiation, root tips and phloem, but not in xylem.</text>
</comment>
<comment type="developmental stage">
    <text evidence="5">Expressed in tapetal layer of developing anthers and then expression gradually increases in developing microspores and in mature pollen.</text>
</comment>
<comment type="induction">
    <text evidence="5">Not regulated by salt stresses.</text>
</comment>
<comment type="domain">
    <text evidence="1">The DHHC domain is required for palmitoyltransferase activity.</text>
</comment>
<comment type="disruption phenotype">
    <text evidence="5">Pleiotropic growth defects, including smaller leaves, dwarfism, and sterility. Hypersensitivity to salt stress and compromised pollen tube growth.</text>
</comment>
<comment type="similarity">
    <text evidence="7">Belongs to the DHHC palmitoyltransferase family.</text>
</comment>
<comment type="sequence caution" evidence="7">
    <conflict type="erroneous gene model prediction">
        <sequence resource="EMBL-CDS" id="CAB63003"/>
    </conflict>
</comment>
<evidence type="ECO:0000250" key="1"/>
<evidence type="ECO:0000255" key="2"/>
<evidence type="ECO:0000255" key="3">
    <source>
        <dbReference type="PROSITE-ProRule" id="PRU00067"/>
    </source>
</evidence>
<evidence type="ECO:0000269" key="4">
    <source>
    </source>
</evidence>
<evidence type="ECO:0000269" key="5">
    <source>
    </source>
</evidence>
<evidence type="ECO:0000269" key="6">
    <source ref="5"/>
</evidence>
<evidence type="ECO:0000305" key="7"/>
<proteinExistence type="evidence at protein level"/>
<organism>
    <name type="scientific">Arabidopsis thaliana</name>
    <name type="common">Mouse-ear cress</name>
    <dbReference type="NCBI Taxonomy" id="3702"/>
    <lineage>
        <taxon>Eukaryota</taxon>
        <taxon>Viridiplantae</taxon>
        <taxon>Streptophyta</taxon>
        <taxon>Embryophyta</taxon>
        <taxon>Tracheophyta</taxon>
        <taxon>Spermatophyta</taxon>
        <taxon>Magnoliopsida</taxon>
        <taxon>eudicotyledons</taxon>
        <taxon>Gunneridae</taxon>
        <taxon>Pentapetalae</taxon>
        <taxon>rosids</taxon>
        <taxon>malvids</taxon>
        <taxon>Brassicales</taxon>
        <taxon>Brassicaceae</taxon>
        <taxon>Camelineae</taxon>
        <taxon>Arabidopsis</taxon>
    </lineage>
</organism>
<gene>
    <name type="primary">PAT10</name>
    <name type="ordered locus">At3g51390</name>
    <name type="ORF">F26O13.30</name>
</gene>
<dbReference type="EC" id="2.3.1.225"/>
<dbReference type="EMBL" id="AL133452">
    <property type="protein sequence ID" value="CAB63003.1"/>
    <property type="status" value="ALT_SEQ"/>
    <property type="molecule type" value="Genomic_DNA"/>
</dbReference>
<dbReference type="EMBL" id="CP002686">
    <property type="protein sequence ID" value="AEE78787.1"/>
    <property type="molecule type" value="Genomic_DNA"/>
</dbReference>
<dbReference type="EMBL" id="BT010141">
    <property type="protein sequence ID" value="AAQ22610.1"/>
    <property type="molecule type" value="mRNA"/>
</dbReference>
<dbReference type="EMBL" id="AY087575">
    <property type="protein sequence ID" value="AAM65117.1"/>
    <property type="molecule type" value="mRNA"/>
</dbReference>
<dbReference type="PIR" id="T45770">
    <property type="entry name" value="T45770"/>
</dbReference>
<dbReference type="RefSeq" id="NP_566950.1">
    <property type="nucleotide sequence ID" value="NM_114998.5"/>
</dbReference>
<dbReference type="SMR" id="Q7XA86"/>
<dbReference type="BioGRID" id="9620">
    <property type="interactions" value="1"/>
</dbReference>
<dbReference type="FunCoup" id="Q7XA86">
    <property type="interactions" value="904"/>
</dbReference>
<dbReference type="IntAct" id="Q7XA86">
    <property type="interactions" value="1"/>
</dbReference>
<dbReference type="STRING" id="3702.Q7XA86"/>
<dbReference type="iPTMnet" id="Q7XA86"/>
<dbReference type="SwissPalm" id="Q7XA86"/>
<dbReference type="PaxDb" id="3702-AT3G51390.1"/>
<dbReference type="ProteomicsDB" id="242975"/>
<dbReference type="EnsemblPlants" id="AT3G51390.1">
    <property type="protein sequence ID" value="AT3G51390.1"/>
    <property type="gene ID" value="AT3G51390"/>
</dbReference>
<dbReference type="GeneID" id="824302"/>
<dbReference type="Gramene" id="AT3G51390.1">
    <property type="protein sequence ID" value="AT3G51390.1"/>
    <property type="gene ID" value="AT3G51390"/>
</dbReference>
<dbReference type="KEGG" id="ath:AT3G51390"/>
<dbReference type="Araport" id="AT3G51390"/>
<dbReference type="TAIR" id="AT3G51390">
    <property type="gene designation" value="PAT10"/>
</dbReference>
<dbReference type="eggNOG" id="ENOG502QT5K">
    <property type="taxonomic scope" value="Eukaryota"/>
</dbReference>
<dbReference type="HOGENOM" id="CLU_031257_0_0_1"/>
<dbReference type="InParanoid" id="Q7XA86"/>
<dbReference type="OrthoDB" id="9909019at2759"/>
<dbReference type="PhylomeDB" id="Q7XA86"/>
<dbReference type="BRENDA" id="2.3.1.225">
    <property type="organism ID" value="399"/>
</dbReference>
<dbReference type="PRO" id="PR:Q7XA86"/>
<dbReference type="Proteomes" id="UP000006548">
    <property type="component" value="Chromosome 3"/>
</dbReference>
<dbReference type="ExpressionAtlas" id="Q7XA86">
    <property type="expression patterns" value="baseline and differential"/>
</dbReference>
<dbReference type="GO" id="GO:0000325">
    <property type="term" value="C:plant-type vacuole"/>
    <property type="evidence" value="ECO:0007005"/>
    <property type="project" value="TAIR"/>
</dbReference>
<dbReference type="GO" id="GO:0009705">
    <property type="term" value="C:plant-type vacuole membrane"/>
    <property type="evidence" value="ECO:0000314"/>
    <property type="project" value="UniProtKB"/>
</dbReference>
<dbReference type="GO" id="GO:0019706">
    <property type="term" value="F:protein-cysteine S-palmitoyltransferase activity"/>
    <property type="evidence" value="ECO:0007669"/>
    <property type="project" value="UniProtKB-EC"/>
</dbReference>
<dbReference type="GO" id="GO:0099402">
    <property type="term" value="P:plant organ development"/>
    <property type="evidence" value="ECO:0000315"/>
    <property type="project" value="UniProtKB"/>
</dbReference>
<dbReference type="GO" id="GO:0009651">
    <property type="term" value="P:response to salt stress"/>
    <property type="evidence" value="ECO:0000315"/>
    <property type="project" value="UniProtKB"/>
</dbReference>
<dbReference type="InterPro" id="IPR001594">
    <property type="entry name" value="Palmitoyltrfase_DHHC"/>
</dbReference>
<dbReference type="InterPro" id="IPR039859">
    <property type="entry name" value="PFA4/ZDH16/20/ERF2-like"/>
</dbReference>
<dbReference type="PANTHER" id="PTHR22883:SF301">
    <property type="entry name" value="PALMITOYLTRANSFERASE ZDHHC12"/>
    <property type="match status" value="1"/>
</dbReference>
<dbReference type="PANTHER" id="PTHR22883">
    <property type="entry name" value="ZINC FINGER DHHC DOMAIN CONTAINING PROTEIN"/>
    <property type="match status" value="1"/>
</dbReference>
<dbReference type="Pfam" id="PF01529">
    <property type="entry name" value="DHHC"/>
    <property type="match status" value="1"/>
</dbReference>
<dbReference type="PROSITE" id="PS50216">
    <property type="entry name" value="DHHC"/>
    <property type="match status" value="1"/>
</dbReference>
<name>ZDH11_ARATH</name>
<keyword id="KW-0012">Acyltransferase</keyword>
<keyword id="KW-0449">Lipoprotein</keyword>
<keyword id="KW-0472">Membrane</keyword>
<keyword id="KW-0564">Palmitate</keyword>
<keyword id="KW-1185">Reference proteome</keyword>
<keyword id="KW-0808">Transferase</keyword>
<keyword id="KW-0812">Transmembrane</keyword>
<keyword id="KW-1133">Transmembrane helix</keyword>
<keyword id="KW-0926">Vacuole</keyword>
<protein>
    <recommendedName>
        <fullName>Protein S-acyltransferase 10</fullName>
        <ecNumber>2.3.1.225</ecNumber>
    </recommendedName>
    <alternativeName>
        <fullName>Probable palmitoyltransferase At3g51390</fullName>
    </alternativeName>
    <alternativeName>
        <fullName>Zinc finger DHHC domain-containing protein At3g51390</fullName>
    </alternativeName>
</protein>
<accession>Q7XA86</accession>
<accession>Q8LAV8</accession>
<accession>Q9SD10</accession>
<sequence>MGVCCPFLQPWDRARDQCLLNLPCLSDPVRRSSLLLKLALVALHLVFIGFLFLFDAEFIEKTKRDPWYMGCYILLFSATLLQYFVTSGSSPGYVVDAMRDVCEASAMYRNPSTTSIQHASRKSESVVVNVEGGSASCPRRPPTPWGKLVLDLYPPGTSIRNLTCGYCHVEQPPRTKHCHDCDRCVLQFDHHCVWLGTCIGQKNHSKFWWYICEETTLCIWTLIMYVDYLSNVAKPWWKNAIIILLLVILAISLIFVLLLLIFHSYLILTNQSTYELVRRRRIPYMRNIPGRVHPFSRGIRRNLYNVCCGNYNLDSLPTAFELEDRSRPYTCIDMLKCRCC</sequence>
<feature type="chain" id="PRO_0000363597" description="Protein S-acyltransferase 10">
    <location>
        <begin position="1"/>
        <end position="340"/>
    </location>
</feature>
<feature type="transmembrane region" description="Helical" evidence="2">
    <location>
        <begin position="34"/>
        <end position="54"/>
    </location>
</feature>
<feature type="transmembrane region" description="Helical" evidence="2">
    <location>
        <begin position="66"/>
        <end position="86"/>
    </location>
</feature>
<feature type="transmembrane region" description="Helical" evidence="2">
    <location>
        <begin position="207"/>
        <end position="227"/>
    </location>
</feature>
<feature type="transmembrane region" description="Helical" evidence="2">
    <location>
        <begin position="241"/>
        <end position="261"/>
    </location>
</feature>
<feature type="domain" description="DHHC" evidence="3">
    <location>
        <begin position="162"/>
        <end position="212"/>
    </location>
</feature>
<feature type="active site" description="S-palmitoyl cysteine intermediate" evidence="1">
    <location>
        <position position="192"/>
    </location>
</feature>
<feature type="mutagenesis site" description="Loss of function." evidence="5">
    <original>C</original>
    <variation>S</variation>
    <location>
        <position position="192"/>
    </location>
</feature>
<feature type="sequence conflict" description="In Ref. 4; AAM65117." evidence="7" ref="4">
    <original>R</original>
    <variation>K</variation>
    <location>
        <position position="140"/>
    </location>
</feature>
<feature type="sequence conflict" description="In Ref. 4; AAM65117." evidence="7" ref="4">
    <original>G</original>
    <variation>V</variation>
    <location>
        <position position="196"/>
    </location>
</feature>